<organism>
    <name type="scientific">Shewanella baltica (strain OS185)</name>
    <dbReference type="NCBI Taxonomy" id="402882"/>
    <lineage>
        <taxon>Bacteria</taxon>
        <taxon>Pseudomonadati</taxon>
        <taxon>Pseudomonadota</taxon>
        <taxon>Gammaproteobacteria</taxon>
        <taxon>Alteromonadales</taxon>
        <taxon>Shewanellaceae</taxon>
        <taxon>Shewanella</taxon>
    </lineage>
</organism>
<accession>A6WS79</accession>
<sequence>MAKHLFTSESVSEGHPDKIADQISDAVLDAILAQDPKARVACETYVKTGMVLVGGEVTTSAWVDIEEITRKTVREIGYTHSDMGFDADSCAVLNAIGKQSPDINQGVDRADPAEQGAGDQGLMFGYANNETDVLMPAPITYAHALVKRQSEVRKNGTLPWLRPDAKSQVTFAYDDGKIVGIDAVVLSTQHRDDVSQADLIEGVMETIIKPVLPAQWLNKDTKFFINPTGRFVIGGPVGDCGLTGRKIIVDTYGGMARHGGGAFSGKDPSKVDRSAAYAARYVAKNIVAAGLADRCEIQVSYAIGVAEPTSISIETFGTGKVSEDLLIKLVRQHFELRPYGLTAMLDLARPIYQATAAYGHFGRNEFPWEATDKAEALRADAGL</sequence>
<protein>
    <recommendedName>
        <fullName evidence="1">S-adenosylmethionine synthase</fullName>
        <shortName evidence="1">AdoMet synthase</shortName>
        <ecNumber evidence="1">2.5.1.6</ecNumber>
    </recommendedName>
    <alternativeName>
        <fullName evidence="1">MAT</fullName>
    </alternativeName>
    <alternativeName>
        <fullName evidence="1">Methionine adenosyltransferase</fullName>
    </alternativeName>
</protein>
<name>METK_SHEB8</name>
<comment type="function">
    <text evidence="1">Catalyzes the formation of S-adenosylmethionine (AdoMet) from methionine and ATP. The overall synthetic reaction is composed of two sequential steps, AdoMet formation and the subsequent tripolyphosphate hydrolysis which occurs prior to release of AdoMet from the enzyme.</text>
</comment>
<comment type="catalytic activity">
    <reaction evidence="1">
        <text>L-methionine + ATP + H2O = S-adenosyl-L-methionine + phosphate + diphosphate</text>
        <dbReference type="Rhea" id="RHEA:21080"/>
        <dbReference type="ChEBI" id="CHEBI:15377"/>
        <dbReference type="ChEBI" id="CHEBI:30616"/>
        <dbReference type="ChEBI" id="CHEBI:33019"/>
        <dbReference type="ChEBI" id="CHEBI:43474"/>
        <dbReference type="ChEBI" id="CHEBI:57844"/>
        <dbReference type="ChEBI" id="CHEBI:59789"/>
        <dbReference type="EC" id="2.5.1.6"/>
    </reaction>
</comment>
<comment type="cofactor">
    <cofactor evidence="1">
        <name>Mg(2+)</name>
        <dbReference type="ChEBI" id="CHEBI:18420"/>
    </cofactor>
    <text evidence="1">Binds 2 divalent ions per subunit.</text>
</comment>
<comment type="cofactor">
    <cofactor evidence="1">
        <name>K(+)</name>
        <dbReference type="ChEBI" id="CHEBI:29103"/>
    </cofactor>
    <text evidence="1">Binds 1 potassium ion per subunit.</text>
</comment>
<comment type="pathway">
    <text evidence="1">Amino-acid biosynthesis; S-adenosyl-L-methionine biosynthesis; S-adenosyl-L-methionine from L-methionine: step 1/1.</text>
</comment>
<comment type="subunit">
    <text evidence="1">Homotetramer; dimer of dimers.</text>
</comment>
<comment type="subcellular location">
    <subcellularLocation>
        <location evidence="1">Cytoplasm</location>
    </subcellularLocation>
</comment>
<comment type="similarity">
    <text evidence="1">Belongs to the AdoMet synthase family.</text>
</comment>
<reference key="1">
    <citation type="submission" date="2007-07" db="EMBL/GenBank/DDBJ databases">
        <title>Complete sequence of chromosome of Shewanella baltica OS185.</title>
        <authorList>
            <consortium name="US DOE Joint Genome Institute"/>
            <person name="Copeland A."/>
            <person name="Lucas S."/>
            <person name="Lapidus A."/>
            <person name="Barry K."/>
            <person name="Glavina del Rio T."/>
            <person name="Dalin E."/>
            <person name="Tice H."/>
            <person name="Pitluck S."/>
            <person name="Sims D."/>
            <person name="Brettin T."/>
            <person name="Bruce D."/>
            <person name="Detter J.C."/>
            <person name="Han C."/>
            <person name="Schmutz J."/>
            <person name="Larimer F."/>
            <person name="Land M."/>
            <person name="Hauser L."/>
            <person name="Kyrpides N."/>
            <person name="Mikhailova N."/>
            <person name="Brettar I."/>
            <person name="Rodrigues J."/>
            <person name="Konstantinidis K."/>
            <person name="Tiedje J."/>
            <person name="Richardson P."/>
        </authorList>
    </citation>
    <scope>NUCLEOTIDE SEQUENCE [LARGE SCALE GENOMIC DNA]</scope>
    <source>
        <strain>OS185</strain>
    </source>
</reference>
<feature type="chain" id="PRO_1000007954" description="S-adenosylmethionine synthase">
    <location>
        <begin position="1"/>
        <end position="383"/>
    </location>
</feature>
<feature type="region of interest" description="Flexible loop" evidence="1">
    <location>
        <begin position="99"/>
        <end position="109"/>
    </location>
</feature>
<feature type="binding site" description="in other chain" evidence="1">
    <location>
        <position position="15"/>
    </location>
    <ligand>
        <name>ATP</name>
        <dbReference type="ChEBI" id="CHEBI:30616"/>
        <note>ligand shared between two neighboring subunits</note>
    </ligand>
</feature>
<feature type="binding site" evidence="1">
    <location>
        <position position="17"/>
    </location>
    <ligand>
        <name>Mg(2+)</name>
        <dbReference type="ChEBI" id="CHEBI:18420"/>
    </ligand>
</feature>
<feature type="binding site" evidence="1">
    <location>
        <position position="43"/>
    </location>
    <ligand>
        <name>K(+)</name>
        <dbReference type="ChEBI" id="CHEBI:29103"/>
    </ligand>
</feature>
<feature type="binding site" description="in other chain" evidence="1">
    <location>
        <position position="56"/>
    </location>
    <ligand>
        <name>L-methionine</name>
        <dbReference type="ChEBI" id="CHEBI:57844"/>
        <note>ligand shared between two neighboring subunits</note>
    </ligand>
</feature>
<feature type="binding site" description="in other chain" evidence="1">
    <location>
        <position position="99"/>
    </location>
    <ligand>
        <name>L-methionine</name>
        <dbReference type="ChEBI" id="CHEBI:57844"/>
        <note>ligand shared between two neighboring subunits</note>
    </ligand>
</feature>
<feature type="binding site" description="in other chain" evidence="1">
    <location>
        <begin position="164"/>
        <end position="166"/>
    </location>
    <ligand>
        <name>ATP</name>
        <dbReference type="ChEBI" id="CHEBI:30616"/>
        <note>ligand shared between two neighboring subunits</note>
    </ligand>
</feature>
<feature type="binding site" description="in other chain" evidence="1">
    <location>
        <begin position="230"/>
        <end position="231"/>
    </location>
    <ligand>
        <name>ATP</name>
        <dbReference type="ChEBI" id="CHEBI:30616"/>
        <note>ligand shared between two neighboring subunits</note>
    </ligand>
</feature>
<feature type="binding site" evidence="1">
    <location>
        <position position="239"/>
    </location>
    <ligand>
        <name>ATP</name>
        <dbReference type="ChEBI" id="CHEBI:30616"/>
        <note>ligand shared between two neighboring subunits</note>
    </ligand>
</feature>
<feature type="binding site" evidence="1">
    <location>
        <position position="239"/>
    </location>
    <ligand>
        <name>L-methionine</name>
        <dbReference type="ChEBI" id="CHEBI:57844"/>
        <note>ligand shared between two neighboring subunits</note>
    </ligand>
</feature>
<feature type="binding site" description="in other chain" evidence="1">
    <location>
        <begin position="245"/>
        <end position="246"/>
    </location>
    <ligand>
        <name>ATP</name>
        <dbReference type="ChEBI" id="CHEBI:30616"/>
        <note>ligand shared between two neighboring subunits</note>
    </ligand>
</feature>
<feature type="binding site" evidence="1">
    <location>
        <position position="262"/>
    </location>
    <ligand>
        <name>ATP</name>
        <dbReference type="ChEBI" id="CHEBI:30616"/>
        <note>ligand shared between two neighboring subunits</note>
    </ligand>
</feature>
<feature type="binding site" evidence="1">
    <location>
        <position position="266"/>
    </location>
    <ligand>
        <name>ATP</name>
        <dbReference type="ChEBI" id="CHEBI:30616"/>
        <note>ligand shared between two neighboring subunits</note>
    </ligand>
</feature>
<feature type="binding site" description="in other chain" evidence="1">
    <location>
        <position position="270"/>
    </location>
    <ligand>
        <name>L-methionine</name>
        <dbReference type="ChEBI" id="CHEBI:57844"/>
        <note>ligand shared between two neighboring subunits</note>
    </ligand>
</feature>
<keyword id="KW-0067">ATP-binding</keyword>
<keyword id="KW-0963">Cytoplasm</keyword>
<keyword id="KW-0460">Magnesium</keyword>
<keyword id="KW-0479">Metal-binding</keyword>
<keyword id="KW-0547">Nucleotide-binding</keyword>
<keyword id="KW-0554">One-carbon metabolism</keyword>
<keyword id="KW-0630">Potassium</keyword>
<keyword id="KW-0808">Transferase</keyword>
<dbReference type="EC" id="2.5.1.6" evidence="1"/>
<dbReference type="EMBL" id="CP000753">
    <property type="protein sequence ID" value="ABS09668.1"/>
    <property type="molecule type" value="Genomic_DNA"/>
</dbReference>
<dbReference type="RefSeq" id="WP_006080333.1">
    <property type="nucleotide sequence ID" value="NC_009665.1"/>
</dbReference>
<dbReference type="SMR" id="A6WS79"/>
<dbReference type="GeneID" id="11774964"/>
<dbReference type="KEGG" id="sbm:Shew185_3541"/>
<dbReference type="HOGENOM" id="CLU_041802_1_1_6"/>
<dbReference type="UniPathway" id="UPA00315">
    <property type="reaction ID" value="UER00080"/>
</dbReference>
<dbReference type="GO" id="GO:0005737">
    <property type="term" value="C:cytoplasm"/>
    <property type="evidence" value="ECO:0007669"/>
    <property type="project" value="UniProtKB-SubCell"/>
</dbReference>
<dbReference type="GO" id="GO:0005524">
    <property type="term" value="F:ATP binding"/>
    <property type="evidence" value="ECO:0007669"/>
    <property type="project" value="UniProtKB-UniRule"/>
</dbReference>
<dbReference type="GO" id="GO:0000287">
    <property type="term" value="F:magnesium ion binding"/>
    <property type="evidence" value="ECO:0007669"/>
    <property type="project" value="UniProtKB-UniRule"/>
</dbReference>
<dbReference type="GO" id="GO:0004478">
    <property type="term" value="F:methionine adenosyltransferase activity"/>
    <property type="evidence" value="ECO:0007669"/>
    <property type="project" value="UniProtKB-UniRule"/>
</dbReference>
<dbReference type="GO" id="GO:0006730">
    <property type="term" value="P:one-carbon metabolic process"/>
    <property type="evidence" value="ECO:0007669"/>
    <property type="project" value="UniProtKB-KW"/>
</dbReference>
<dbReference type="GO" id="GO:0006556">
    <property type="term" value="P:S-adenosylmethionine biosynthetic process"/>
    <property type="evidence" value="ECO:0007669"/>
    <property type="project" value="UniProtKB-UniRule"/>
</dbReference>
<dbReference type="CDD" id="cd18079">
    <property type="entry name" value="S-AdoMet_synt"/>
    <property type="match status" value="1"/>
</dbReference>
<dbReference type="FunFam" id="3.30.300.10:FF:000001">
    <property type="entry name" value="S-adenosylmethionine synthase"/>
    <property type="match status" value="1"/>
</dbReference>
<dbReference type="FunFam" id="3.30.300.10:FF:000003">
    <property type="entry name" value="S-adenosylmethionine synthase"/>
    <property type="match status" value="1"/>
</dbReference>
<dbReference type="FunFam" id="3.30.300.10:FF:000004">
    <property type="entry name" value="S-adenosylmethionine synthase"/>
    <property type="match status" value="1"/>
</dbReference>
<dbReference type="Gene3D" id="3.30.300.10">
    <property type="match status" value="3"/>
</dbReference>
<dbReference type="HAMAP" id="MF_00086">
    <property type="entry name" value="S_AdoMet_synth1"/>
    <property type="match status" value="1"/>
</dbReference>
<dbReference type="InterPro" id="IPR022631">
    <property type="entry name" value="ADOMET_SYNTHASE_CS"/>
</dbReference>
<dbReference type="InterPro" id="IPR022630">
    <property type="entry name" value="S-AdoMet_synt_C"/>
</dbReference>
<dbReference type="InterPro" id="IPR022629">
    <property type="entry name" value="S-AdoMet_synt_central"/>
</dbReference>
<dbReference type="InterPro" id="IPR022628">
    <property type="entry name" value="S-AdoMet_synt_N"/>
</dbReference>
<dbReference type="InterPro" id="IPR002133">
    <property type="entry name" value="S-AdoMet_synthetase"/>
</dbReference>
<dbReference type="InterPro" id="IPR022636">
    <property type="entry name" value="S-AdoMet_synthetase_sfam"/>
</dbReference>
<dbReference type="NCBIfam" id="TIGR01034">
    <property type="entry name" value="metK"/>
    <property type="match status" value="1"/>
</dbReference>
<dbReference type="PANTHER" id="PTHR11964">
    <property type="entry name" value="S-ADENOSYLMETHIONINE SYNTHETASE"/>
    <property type="match status" value="1"/>
</dbReference>
<dbReference type="Pfam" id="PF02773">
    <property type="entry name" value="S-AdoMet_synt_C"/>
    <property type="match status" value="1"/>
</dbReference>
<dbReference type="Pfam" id="PF02772">
    <property type="entry name" value="S-AdoMet_synt_M"/>
    <property type="match status" value="1"/>
</dbReference>
<dbReference type="Pfam" id="PF00438">
    <property type="entry name" value="S-AdoMet_synt_N"/>
    <property type="match status" value="1"/>
</dbReference>
<dbReference type="PIRSF" id="PIRSF000497">
    <property type="entry name" value="MAT"/>
    <property type="match status" value="1"/>
</dbReference>
<dbReference type="SUPFAM" id="SSF55973">
    <property type="entry name" value="S-adenosylmethionine synthetase"/>
    <property type="match status" value="3"/>
</dbReference>
<dbReference type="PROSITE" id="PS00376">
    <property type="entry name" value="ADOMET_SYNTHASE_1"/>
    <property type="match status" value="1"/>
</dbReference>
<dbReference type="PROSITE" id="PS00377">
    <property type="entry name" value="ADOMET_SYNTHASE_2"/>
    <property type="match status" value="1"/>
</dbReference>
<gene>
    <name evidence="1" type="primary">metK</name>
    <name type="ordered locus">Shew185_3541</name>
</gene>
<proteinExistence type="inferred from homology"/>
<evidence type="ECO:0000255" key="1">
    <source>
        <dbReference type="HAMAP-Rule" id="MF_00086"/>
    </source>
</evidence>